<name>SXA2_SCHPO</name>
<protein>
    <recommendedName>
        <fullName>Carboxypeptidase sxa2</fullName>
        <ecNumber>3.4.16.-</ecNumber>
    </recommendedName>
</protein>
<proteinExistence type="evidence at transcript level"/>
<organism>
    <name type="scientific">Schizosaccharomyces pombe (strain 972 / ATCC 24843)</name>
    <name type="common">Fission yeast</name>
    <dbReference type="NCBI Taxonomy" id="284812"/>
    <lineage>
        <taxon>Eukaryota</taxon>
        <taxon>Fungi</taxon>
        <taxon>Dikarya</taxon>
        <taxon>Ascomycota</taxon>
        <taxon>Taphrinomycotina</taxon>
        <taxon>Schizosaccharomycetes</taxon>
        <taxon>Schizosaccharomycetales</taxon>
        <taxon>Schizosaccharomycetaceae</taxon>
        <taxon>Schizosaccharomyces</taxon>
    </lineage>
</organism>
<sequence>MLSLFLKSLFAIIIIELTIIHALPTYTVHWKCSIQQANTSSASSNQTVQPRQHAAPSSDRIKSLPEFKGSLPELYSGYLEANSDKSLFYTYAPAVVDSETFIVWLQGGPGCAGTLGFFSENGPIEISQSSPSPSLNPESWTNFANMLWLDQPFGTGYSQGQAAYTTTIEEASSDFVNALKSFYQKFPHLMKKKLYLVGESYGSIWSANFAEALLSEPSLNINFMGVGIVSGLTADYETQEQITASIWVEHISKLGYYFNNTSSTISEEFKKRNKECQYDSVLNRLTFPTEQYPIWRPEYNFSTSTSLRKREALDGEDIGNVFNSISGCDLYSLSNFLLYLENSCVITYDVSLDCSFNEYNDPLITYLNREDVRSSLHATKASTALTSGEGVFADGCNFDLYKKIVSNNVESVLVEIIPRLTEKYKVSFLAGALDLQILWTGTLLALQNTTWNGWQGFTQSPGSLETTNGFTLDERNLAFTLSNSVGHMAPSKDPQMVREWLENTLLY</sequence>
<evidence type="ECO:0000250" key="1"/>
<evidence type="ECO:0000255" key="2"/>
<evidence type="ECO:0000256" key="3">
    <source>
        <dbReference type="SAM" id="MobiDB-lite"/>
    </source>
</evidence>
<evidence type="ECO:0000305" key="4"/>
<reference key="1">
    <citation type="journal article" date="1992" name="Mol. Cell. Biol.">
        <title>Schizosaccharomyces pombe sxa1+ and sxa2+ encode putative proteases involved in the mating response.</title>
        <authorList>
            <person name="Imai Y."/>
            <person name="Yamamoto M."/>
        </authorList>
    </citation>
    <scope>NUCLEOTIDE SEQUENCE [GENOMIC DNA]</scope>
</reference>
<reference key="2">
    <citation type="journal article" date="2002" name="Nature">
        <title>The genome sequence of Schizosaccharomyces pombe.</title>
        <authorList>
            <person name="Wood V."/>
            <person name="Gwilliam R."/>
            <person name="Rajandream M.A."/>
            <person name="Lyne M.H."/>
            <person name="Lyne R."/>
            <person name="Stewart A."/>
            <person name="Sgouros J.G."/>
            <person name="Peat N."/>
            <person name="Hayles J."/>
            <person name="Baker S.G."/>
            <person name="Basham D."/>
            <person name="Bowman S."/>
            <person name="Brooks K."/>
            <person name="Brown D."/>
            <person name="Brown S."/>
            <person name="Chillingworth T."/>
            <person name="Churcher C.M."/>
            <person name="Collins M."/>
            <person name="Connor R."/>
            <person name="Cronin A."/>
            <person name="Davis P."/>
            <person name="Feltwell T."/>
            <person name="Fraser A."/>
            <person name="Gentles S."/>
            <person name="Goble A."/>
            <person name="Hamlin N."/>
            <person name="Harris D.E."/>
            <person name="Hidalgo J."/>
            <person name="Hodgson G."/>
            <person name="Holroyd S."/>
            <person name="Hornsby T."/>
            <person name="Howarth S."/>
            <person name="Huckle E.J."/>
            <person name="Hunt S."/>
            <person name="Jagels K."/>
            <person name="James K.D."/>
            <person name="Jones L."/>
            <person name="Jones M."/>
            <person name="Leather S."/>
            <person name="McDonald S."/>
            <person name="McLean J."/>
            <person name="Mooney P."/>
            <person name="Moule S."/>
            <person name="Mungall K.L."/>
            <person name="Murphy L.D."/>
            <person name="Niblett D."/>
            <person name="Odell C."/>
            <person name="Oliver K."/>
            <person name="O'Neil S."/>
            <person name="Pearson D."/>
            <person name="Quail M.A."/>
            <person name="Rabbinowitsch E."/>
            <person name="Rutherford K.M."/>
            <person name="Rutter S."/>
            <person name="Saunders D."/>
            <person name="Seeger K."/>
            <person name="Sharp S."/>
            <person name="Skelton J."/>
            <person name="Simmonds M.N."/>
            <person name="Squares R."/>
            <person name="Squares S."/>
            <person name="Stevens K."/>
            <person name="Taylor K."/>
            <person name="Taylor R.G."/>
            <person name="Tivey A."/>
            <person name="Walsh S.V."/>
            <person name="Warren T."/>
            <person name="Whitehead S."/>
            <person name="Woodward J.R."/>
            <person name="Volckaert G."/>
            <person name="Aert R."/>
            <person name="Robben J."/>
            <person name="Grymonprez B."/>
            <person name="Weltjens I."/>
            <person name="Vanstreels E."/>
            <person name="Rieger M."/>
            <person name="Schaefer M."/>
            <person name="Mueller-Auer S."/>
            <person name="Gabel C."/>
            <person name="Fuchs M."/>
            <person name="Duesterhoeft A."/>
            <person name="Fritzc C."/>
            <person name="Holzer E."/>
            <person name="Moestl D."/>
            <person name="Hilbert H."/>
            <person name="Borzym K."/>
            <person name="Langer I."/>
            <person name="Beck A."/>
            <person name="Lehrach H."/>
            <person name="Reinhardt R."/>
            <person name="Pohl T.M."/>
            <person name="Eger P."/>
            <person name="Zimmermann W."/>
            <person name="Wedler H."/>
            <person name="Wambutt R."/>
            <person name="Purnelle B."/>
            <person name="Goffeau A."/>
            <person name="Cadieu E."/>
            <person name="Dreano S."/>
            <person name="Gloux S."/>
            <person name="Lelaure V."/>
            <person name="Mottier S."/>
            <person name="Galibert F."/>
            <person name="Aves S.J."/>
            <person name="Xiang Z."/>
            <person name="Hunt C."/>
            <person name="Moore K."/>
            <person name="Hurst S.M."/>
            <person name="Lucas M."/>
            <person name="Rochet M."/>
            <person name="Gaillardin C."/>
            <person name="Tallada V.A."/>
            <person name="Garzon A."/>
            <person name="Thode G."/>
            <person name="Daga R.R."/>
            <person name="Cruzado L."/>
            <person name="Jimenez J."/>
            <person name="Sanchez M."/>
            <person name="del Rey F."/>
            <person name="Benito J."/>
            <person name="Dominguez A."/>
            <person name="Revuelta J.L."/>
            <person name="Moreno S."/>
            <person name="Armstrong J."/>
            <person name="Forsburg S.L."/>
            <person name="Cerutti L."/>
            <person name="Lowe T."/>
            <person name="McCombie W.R."/>
            <person name="Paulsen I."/>
            <person name="Potashkin J."/>
            <person name="Shpakovski G.V."/>
            <person name="Ussery D."/>
            <person name="Barrell B.G."/>
            <person name="Nurse P."/>
        </authorList>
    </citation>
    <scope>NUCLEOTIDE SEQUENCE [LARGE SCALE GENOMIC DNA]</scope>
    <source>
        <strain>972 / ATCC 24843</strain>
    </source>
</reference>
<feature type="signal peptide" evidence="2">
    <location>
        <begin position="1"/>
        <end position="22"/>
    </location>
</feature>
<feature type="chain" id="PRO_0000004288" description="Carboxypeptidase sxa2">
    <location>
        <begin position="23"/>
        <end position="507"/>
    </location>
</feature>
<feature type="region of interest" description="Disordered" evidence="3">
    <location>
        <begin position="41"/>
        <end position="64"/>
    </location>
</feature>
<feature type="active site" evidence="1">
    <location>
        <position position="200"/>
    </location>
</feature>
<feature type="active site" evidence="1">
    <location>
        <position position="434"/>
    </location>
</feature>
<feature type="active site" evidence="1">
    <location>
        <position position="487"/>
    </location>
</feature>
<feature type="glycosylation site" description="N-linked (GlcNAc...) asparagine" evidence="2">
    <location>
        <position position="38"/>
    </location>
</feature>
<feature type="glycosylation site" description="N-linked (GlcNAc...) asparagine" evidence="2">
    <location>
        <position position="45"/>
    </location>
</feature>
<feature type="glycosylation site" description="N-linked (GlcNAc...) asparagine" evidence="2">
    <location>
        <position position="259"/>
    </location>
</feature>
<feature type="glycosylation site" description="N-linked (GlcNAc...) asparagine" evidence="2">
    <location>
        <position position="260"/>
    </location>
</feature>
<feature type="glycosylation site" description="N-linked (GlcNAc...) asparagine" evidence="2">
    <location>
        <position position="300"/>
    </location>
</feature>
<feature type="glycosylation site" description="N-linked (GlcNAc...) asparagine" evidence="2">
    <location>
        <position position="448"/>
    </location>
</feature>
<dbReference type="EC" id="3.4.16.-"/>
<dbReference type="EMBL" id="D10199">
    <property type="protein sequence ID" value="BAA01047.1"/>
    <property type="molecule type" value="Genomic_DNA"/>
</dbReference>
<dbReference type="EMBL" id="CU329670">
    <property type="protein sequence ID" value="CAB36509.1"/>
    <property type="molecule type" value="Genomic_DNA"/>
</dbReference>
<dbReference type="PIR" id="B42249">
    <property type="entry name" value="B42249"/>
</dbReference>
<dbReference type="RefSeq" id="NP_593043.1">
    <property type="nucleotide sequence ID" value="NM_001018442.2"/>
</dbReference>
<dbReference type="SMR" id="P32825"/>
<dbReference type="BioGRID" id="278197">
    <property type="interactions" value="8"/>
</dbReference>
<dbReference type="STRING" id="284812.P32825"/>
<dbReference type="ESTHER" id="schpo-sxa2">
    <property type="family name" value="Carboxypeptidase_S10"/>
</dbReference>
<dbReference type="MEROPS" id="S10.012"/>
<dbReference type="GlyCosmos" id="P32825">
    <property type="glycosylation" value="6 sites, No reported glycans"/>
</dbReference>
<dbReference type="iPTMnet" id="P32825"/>
<dbReference type="PaxDb" id="4896-SPAC1296.03c.1"/>
<dbReference type="EnsemblFungi" id="SPAC1296.03c.1">
    <property type="protein sequence ID" value="SPAC1296.03c.1:pep"/>
    <property type="gene ID" value="SPAC1296.03c"/>
</dbReference>
<dbReference type="GeneID" id="2541701"/>
<dbReference type="KEGG" id="spo:2541701"/>
<dbReference type="PomBase" id="SPAC1296.03c">
    <property type="gene designation" value="sxa2"/>
</dbReference>
<dbReference type="VEuPathDB" id="FungiDB:SPAC1296.03c"/>
<dbReference type="eggNOG" id="KOG1282">
    <property type="taxonomic scope" value="Eukaryota"/>
</dbReference>
<dbReference type="HOGENOM" id="CLU_537653_0_0_1"/>
<dbReference type="InParanoid" id="P32825"/>
<dbReference type="OMA" id="DWRNLTN"/>
<dbReference type="PhylomeDB" id="P32825"/>
<dbReference type="PRO" id="PR:P32825"/>
<dbReference type="Proteomes" id="UP000002485">
    <property type="component" value="Chromosome I"/>
</dbReference>
<dbReference type="GO" id="GO:0005829">
    <property type="term" value="C:cytosol"/>
    <property type="evidence" value="ECO:0007005"/>
    <property type="project" value="PomBase"/>
</dbReference>
<dbReference type="GO" id="GO:0005576">
    <property type="term" value="C:extracellular region"/>
    <property type="evidence" value="ECO:0000314"/>
    <property type="project" value="PomBase"/>
</dbReference>
<dbReference type="GO" id="GO:0005634">
    <property type="term" value="C:nucleus"/>
    <property type="evidence" value="ECO:0007005"/>
    <property type="project" value="PomBase"/>
</dbReference>
<dbReference type="GO" id="GO:0004180">
    <property type="term" value="F:carboxypeptidase activity"/>
    <property type="evidence" value="ECO:0000314"/>
    <property type="project" value="PomBase"/>
</dbReference>
<dbReference type="GO" id="GO:0004185">
    <property type="term" value="F:serine-type carboxypeptidase activity"/>
    <property type="evidence" value="ECO:0000314"/>
    <property type="project" value="PomBase"/>
</dbReference>
<dbReference type="GO" id="GO:0000747">
    <property type="term" value="P:conjugation with cellular fusion"/>
    <property type="evidence" value="ECO:0000315"/>
    <property type="project" value="PomBase"/>
</dbReference>
<dbReference type="GO" id="GO:0031138">
    <property type="term" value="P:negative regulation of conjugation with cellular fusion"/>
    <property type="evidence" value="ECO:0000315"/>
    <property type="project" value="PomBase"/>
</dbReference>
<dbReference type="GO" id="GO:0010515">
    <property type="term" value="P:negative regulation of induction of conjugation with cellular fusion"/>
    <property type="evidence" value="ECO:0000315"/>
    <property type="project" value="PomBase"/>
</dbReference>
<dbReference type="GO" id="GO:0043409">
    <property type="term" value="P:negative regulation of MAPK cascade"/>
    <property type="evidence" value="ECO:0000314"/>
    <property type="project" value="PomBase"/>
</dbReference>
<dbReference type="GO" id="GO:0051603">
    <property type="term" value="P:proteolysis involved in protein catabolic process"/>
    <property type="evidence" value="ECO:0000315"/>
    <property type="project" value="PomBase"/>
</dbReference>
<dbReference type="Gene3D" id="3.40.50.1820">
    <property type="entry name" value="alpha/beta hydrolase"/>
    <property type="match status" value="1"/>
</dbReference>
<dbReference type="InterPro" id="IPR029058">
    <property type="entry name" value="AB_hydrolase_fold"/>
</dbReference>
<dbReference type="InterPro" id="IPR001563">
    <property type="entry name" value="Peptidase_S10"/>
</dbReference>
<dbReference type="InterPro" id="IPR033124">
    <property type="entry name" value="Ser_caboxypep_his_AS"/>
</dbReference>
<dbReference type="InterPro" id="IPR018202">
    <property type="entry name" value="Ser_caboxypep_ser_AS"/>
</dbReference>
<dbReference type="PANTHER" id="PTHR11802:SF472">
    <property type="entry name" value="SERINE CARBOXYPEPTIDASE CPVL-RELATED"/>
    <property type="match status" value="1"/>
</dbReference>
<dbReference type="PANTHER" id="PTHR11802">
    <property type="entry name" value="SERINE PROTEASE FAMILY S10 SERINE CARBOXYPEPTIDASE"/>
    <property type="match status" value="1"/>
</dbReference>
<dbReference type="Pfam" id="PF00450">
    <property type="entry name" value="Peptidase_S10"/>
    <property type="match status" value="1"/>
</dbReference>
<dbReference type="PRINTS" id="PR00724">
    <property type="entry name" value="CRBOXYPTASEC"/>
</dbReference>
<dbReference type="SUPFAM" id="SSF53474">
    <property type="entry name" value="alpha/beta-Hydrolases"/>
    <property type="match status" value="1"/>
</dbReference>
<dbReference type="PROSITE" id="PS00560">
    <property type="entry name" value="CARBOXYPEPT_SER_HIS"/>
    <property type="match status" value="1"/>
</dbReference>
<dbReference type="PROSITE" id="PS00131">
    <property type="entry name" value="CARBOXYPEPT_SER_SER"/>
    <property type="match status" value="1"/>
</dbReference>
<comment type="function">
    <text>Involved in degradation or processing of the mating pheromones. Its loss causes a persistent response to the pheromones. It may be required for stabilization of enzymes that are essential for zygote formation. May degrade the mating pheromone P-factor.</text>
</comment>
<comment type="subcellular location">
    <subcellularLocation>
        <location>Secreted</location>
    </subcellularLocation>
</comment>
<comment type="induction">
    <text>Mating pheromone signaling is required for induction.</text>
</comment>
<comment type="similarity">
    <text evidence="4">Belongs to the peptidase S10 family.</text>
</comment>
<keyword id="KW-0121">Carboxypeptidase</keyword>
<keyword id="KW-0325">Glycoprotein</keyword>
<keyword id="KW-0378">Hydrolase</keyword>
<keyword id="KW-0645">Protease</keyword>
<keyword id="KW-1185">Reference proteome</keyword>
<keyword id="KW-0964">Secreted</keyword>
<keyword id="KW-0732">Signal</keyword>
<keyword id="KW-0865">Zymogen</keyword>
<gene>
    <name type="primary">sxa2</name>
    <name type="ORF">SPAC1296.03c</name>
</gene>
<accession>P32825</accession>